<reference key="1">
    <citation type="journal article" date="2008" name="PLoS ONE">
        <title>Comparative analysis of Acinetobacters: three genomes for three lifestyles.</title>
        <authorList>
            <person name="Vallenet D."/>
            <person name="Nordmann P."/>
            <person name="Barbe V."/>
            <person name="Poirel L."/>
            <person name="Mangenot S."/>
            <person name="Bataille E."/>
            <person name="Dossat C."/>
            <person name="Gas S."/>
            <person name="Kreimeyer A."/>
            <person name="Lenoble P."/>
            <person name="Oztas S."/>
            <person name="Poulain J."/>
            <person name="Segurens B."/>
            <person name="Robert C."/>
            <person name="Abergel C."/>
            <person name="Claverie J.-M."/>
            <person name="Raoult D."/>
            <person name="Medigue C."/>
            <person name="Weissenbach J."/>
            <person name="Cruveiller S."/>
        </authorList>
    </citation>
    <scope>NUCLEOTIDE SEQUENCE [LARGE SCALE GENOMIC DNA]</scope>
    <source>
        <strain>AYE</strain>
    </source>
</reference>
<protein>
    <recommendedName>
        <fullName evidence="1">Proline--tRNA ligase</fullName>
        <ecNumber evidence="1">6.1.1.15</ecNumber>
    </recommendedName>
    <alternativeName>
        <fullName evidence="1">Prolyl-tRNA synthetase</fullName>
        <shortName evidence="1">ProRS</shortName>
    </alternativeName>
</protein>
<sequence>MRASRFLFATLRETPNDAEVISHQLMLRAGMIRKLASGLYTWLPMGTRVLKKVDAIVREEMNRSGAMEVFMPVTQPASLWEESGRYEQYGPELLRFKDRHDNPFVLGPTHEEVITDLARNELKSYKQLPVNFYQIQTKFRDEIRPRFGVMRSREFIMKDAYSFHATQESLQETYDVMYDTYSRIFTRLGLDFRPVQADTGSIGGSASHEFHVLAASGEDDIAFSTESDYAANVEMAEAVLVGERAAPTQEFKLVETPNQKTIADVCQFLNADPKQSVKALLVQGVADEKGNVPVVALFLRGDHELNEIKAEKHPLVAAPLAFATEEQLQAFGLTAGFTGPQGLVEKGITVIVDRAASVLSDFVAGANEADKHAIGVNWERDAQITEVFDLRNVVEGDPSPDGKGTLQIKRGIEVGHIFQLGTKYSEALGCKVLGEDGKPFTVTMGCYGIGVTRVVAAAIEQNYDDKGIIWPQAIAPFEIAIVPMNAHKSPRTLEAAEALYAELQAQGFDVLLDDRNERPGVKFSDLELMGIPHRIVIGEKGLDAGTFEYKGRRDAEASNLTKEELLAKLAR</sequence>
<dbReference type="EC" id="6.1.1.15" evidence="1"/>
<dbReference type="EMBL" id="CU459141">
    <property type="protein sequence ID" value="CAM85628.1"/>
    <property type="molecule type" value="Genomic_DNA"/>
</dbReference>
<dbReference type="RefSeq" id="WP_001202759.1">
    <property type="nucleotide sequence ID" value="NZ_JBDGFB010000017.1"/>
</dbReference>
<dbReference type="SMR" id="B0V4Y6"/>
<dbReference type="EnsemblBacteria" id="CAM85628">
    <property type="protein sequence ID" value="CAM85628"/>
    <property type="gene ID" value="ABAYE0663"/>
</dbReference>
<dbReference type="KEGG" id="aby:ABAYE0663"/>
<dbReference type="HOGENOM" id="CLU_016739_0_0_6"/>
<dbReference type="GO" id="GO:0005829">
    <property type="term" value="C:cytosol"/>
    <property type="evidence" value="ECO:0007669"/>
    <property type="project" value="TreeGrafter"/>
</dbReference>
<dbReference type="GO" id="GO:0002161">
    <property type="term" value="F:aminoacyl-tRNA deacylase activity"/>
    <property type="evidence" value="ECO:0007669"/>
    <property type="project" value="InterPro"/>
</dbReference>
<dbReference type="GO" id="GO:0005524">
    <property type="term" value="F:ATP binding"/>
    <property type="evidence" value="ECO:0007669"/>
    <property type="project" value="UniProtKB-UniRule"/>
</dbReference>
<dbReference type="GO" id="GO:0004827">
    <property type="term" value="F:proline-tRNA ligase activity"/>
    <property type="evidence" value="ECO:0007669"/>
    <property type="project" value="UniProtKB-UniRule"/>
</dbReference>
<dbReference type="GO" id="GO:0006433">
    <property type="term" value="P:prolyl-tRNA aminoacylation"/>
    <property type="evidence" value="ECO:0007669"/>
    <property type="project" value="UniProtKB-UniRule"/>
</dbReference>
<dbReference type="CDD" id="cd04334">
    <property type="entry name" value="ProRS-INS"/>
    <property type="match status" value="1"/>
</dbReference>
<dbReference type="CDD" id="cd00861">
    <property type="entry name" value="ProRS_anticodon_short"/>
    <property type="match status" value="1"/>
</dbReference>
<dbReference type="CDD" id="cd00779">
    <property type="entry name" value="ProRS_core_prok"/>
    <property type="match status" value="1"/>
</dbReference>
<dbReference type="FunFam" id="3.30.930.10:FF:000043">
    <property type="entry name" value="Proline--tRNA ligase"/>
    <property type="match status" value="1"/>
</dbReference>
<dbReference type="FunFam" id="3.30.930.10:FF:000097">
    <property type="entry name" value="Proline--tRNA ligase"/>
    <property type="match status" value="1"/>
</dbReference>
<dbReference type="Gene3D" id="3.40.50.800">
    <property type="entry name" value="Anticodon-binding domain"/>
    <property type="match status" value="1"/>
</dbReference>
<dbReference type="Gene3D" id="3.30.930.10">
    <property type="entry name" value="Bira Bifunctional Protein, Domain 2"/>
    <property type="match status" value="2"/>
</dbReference>
<dbReference type="HAMAP" id="MF_01569">
    <property type="entry name" value="Pro_tRNA_synth_type1"/>
    <property type="match status" value="1"/>
</dbReference>
<dbReference type="InterPro" id="IPR002314">
    <property type="entry name" value="aa-tRNA-synt_IIb"/>
</dbReference>
<dbReference type="InterPro" id="IPR006195">
    <property type="entry name" value="aa-tRNA-synth_II"/>
</dbReference>
<dbReference type="InterPro" id="IPR045864">
    <property type="entry name" value="aa-tRNA-synth_II/BPL/LPL"/>
</dbReference>
<dbReference type="InterPro" id="IPR004154">
    <property type="entry name" value="Anticodon-bd"/>
</dbReference>
<dbReference type="InterPro" id="IPR036621">
    <property type="entry name" value="Anticodon-bd_dom_sf"/>
</dbReference>
<dbReference type="InterPro" id="IPR002316">
    <property type="entry name" value="Pro-tRNA-ligase_IIa"/>
</dbReference>
<dbReference type="InterPro" id="IPR004500">
    <property type="entry name" value="Pro-tRNA-synth_IIa_bac-type"/>
</dbReference>
<dbReference type="InterPro" id="IPR023717">
    <property type="entry name" value="Pro-tRNA-Synthase_IIa_type1"/>
</dbReference>
<dbReference type="InterPro" id="IPR050062">
    <property type="entry name" value="Pro-tRNA_synthetase"/>
</dbReference>
<dbReference type="InterPro" id="IPR044140">
    <property type="entry name" value="ProRS_anticodon_short"/>
</dbReference>
<dbReference type="InterPro" id="IPR033730">
    <property type="entry name" value="ProRS_core_prok"/>
</dbReference>
<dbReference type="InterPro" id="IPR036754">
    <property type="entry name" value="YbaK/aa-tRNA-synt-asso_dom_sf"/>
</dbReference>
<dbReference type="InterPro" id="IPR007214">
    <property type="entry name" value="YbaK/aa-tRNA-synth-assoc-dom"/>
</dbReference>
<dbReference type="NCBIfam" id="NF006625">
    <property type="entry name" value="PRK09194.1"/>
    <property type="match status" value="1"/>
</dbReference>
<dbReference type="NCBIfam" id="TIGR00409">
    <property type="entry name" value="proS_fam_II"/>
    <property type="match status" value="1"/>
</dbReference>
<dbReference type="PANTHER" id="PTHR42753">
    <property type="entry name" value="MITOCHONDRIAL RIBOSOME PROTEIN L39/PROLYL-TRNA LIGASE FAMILY MEMBER"/>
    <property type="match status" value="1"/>
</dbReference>
<dbReference type="PANTHER" id="PTHR42753:SF2">
    <property type="entry name" value="PROLINE--TRNA LIGASE"/>
    <property type="match status" value="1"/>
</dbReference>
<dbReference type="Pfam" id="PF03129">
    <property type="entry name" value="HGTP_anticodon"/>
    <property type="match status" value="1"/>
</dbReference>
<dbReference type="Pfam" id="PF00587">
    <property type="entry name" value="tRNA-synt_2b"/>
    <property type="match status" value="1"/>
</dbReference>
<dbReference type="Pfam" id="PF04073">
    <property type="entry name" value="tRNA_edit"/>
    <property type="match status" value="1"/>
</dbReference>
<dbReference type="PIRSF" id="PIRSF001535">
    <property type="entry name" value="ProRS_1"/>
    <property type="match status" value="1"/>
</dbReference>
<dbReference type="PRINTS" id="PR01046">
    <property type="entry name" value="TRNASYNTHPRO"/>
</dbReference>
<dbReference type="SUPFAM" id="SSF52954">
    <property type="entry name" value="Class II aaRS ABD-related"/>
    <property type="match status" value="1"/>
</dbReference>
<dbReference type="SUPFAM" id="SSF55681">
    <property type="entry name" value="Class II aaRS and biotin synthetases"/>
    <property type="match status" value="1"/>
</dbReference>
<dbReference type="SUPFAM" id="SSF55826">
    <property type="entry name" value="YbaK/ProRS associated domain"/>
    <property type="match status" value="1"/>
</dbReference>
<dbReference type="PROSITE" id="PS50862">
    <property type="entry name" value="AA_TRNA_LIGASE_II"/>
    <property type="match status" value="1"/>
</dbReference>
<comment type="function">
    <text evidence="1">Catalyzes the attachment of proline to tRNA(Pro) in a two-step reaction: proline is first activated by ATP to form Pro-AMP and then transferred to the acceptor end of tRNA(Pro). As ProRS can inadvertently accommodate and process non-cognate amino acids such as alanine and cysteine, to avoid such errors it has two additional distinct editing activities against alanine. One activity is designated as 'pretransfer' editing and involves the tRNA(Pro)-independent hydrolysis of activated Ala-AMP. The other activity is designated 'posttransfer' editing and involves deacylation of mischarged Ala-tRNA(Pro). The misacylated Cys-tRNA(Pro) is not edited by ProRS.</text>
</comment>
<comment type="catalytic activity">
    <reaction evidence="1">
        <text>tRNA(Pro) + L-proline + ATP = L-prolyl-tRNA(Pro) + AMP + diphosphate</text>
        <dbReference type="Rhea" id="RHEA:14305"/>
        <dbReference type="Rhea" id="RHEA-COMP:9700"/>
        <dbReference type="Rhea" id="RHEA-COMP:9702"/>
        <dbReference type="ChEBI" id="CHEBI:30616"/>
        <dbReference type="ChEBI" id="CHEBI:33019"/>
        <dbReference type="ChEBI" id="CHEBI:60039"/>
        <dbReference type="ChEBI" id="CHEBI:78442"/>
        <dbReference type="ChEBI" id="CHEBI:78532"/>
        <dbReference type="ChEBI" id="CHEBI:456215"/>
        <dbReference type="EC" id="6.1.1.15"/>
    </reaction>
</comment>
<comment type="subunit">
    <text evidence="1">Homodimer.</text>
</comment>
<comment type="subcellular location">
    <subcellularLocation>
        <location evidence="1">Cytoplasm</location>
    </subcellularLocation>
</comment>
<comment type="domain">
    <text evidence="1">Consists of three domains: the N-terminal catalytic domain, the editing domain and the C-terminal anticodon-binding domain.</text>
</comment>
<comment type="similarity">
    <text evidence="1">Belongs to the class-II aminoacyl-tRNA synthetase family. ProS type 1 subfamily.</text>
</comment>
<proteinExistence type="inferred from homology"/>
<name>SYP_ACIBY</name>
<feature type="chain" id="PRO_1000199344" description="Proline--tRNA ligase">
    <location>
        <begin position="1"/>
        <end position="571"/>
    </location>
</feature>
<organism>
    <name type="scientific">Acinetobacter baumannii (strain AYE)</name>
    <dbReference type="NCBI Taxonomy" id="509173"/>
    <lineage>
        <taxon>Bacteria</taxon>
        <taxon>Pseudomonadati</taxon>
        <taxon>Pseudomonadota</taxon>
        <taxon>Gammaproteobacteria</taxon>
        <taxon>Moraxellales</taxon>
        <taxon>Moraxellaceae</taxon>
        <taxon>Acinetobacter</taxon>
        <taxon>Acinetobacter calcoaceticus/baumannii complex</taxon>
    </lineage>
</organism>
<accession>B0V4Y6</accession>
<evidence type="ECO:0000255" key="1">
    <source>
        <dbReference type="HAMAP-Rule" id="MF_01569"/>
    </source>
</evidence>
<keyword id="KW-0030">Aminoacyl-tRNA synthetase</keyword>
<keyword id="KW-0067">ATP-binding</keyword>
<keyword id="KW-0963">Cytoplasm</keyword>
<keyword id="KW-0436">Ligase</keyword>
<keyword id="KW-0547">Nucleotide-binding</keyword>
<keyword id="KW-0648">Protein biosynthesis</keyword>
<gene>
    <name evidence="1" type="primary">proS</name>
    <name type="ordered locus">ABAYE0663</name>
</gene>